<reference key="1">
    <citation type="journal article" date="2000" name="Eur. J. Biochem.">
        <title>Phylloxin, a novel peptide antibiotic of the dermaseptin family of antimicrobial/opioid peptide precursors.</title>
        <authorList>
            <person name="Pierre T.P."/>
            <person name="Seon A.A."/>
            <person name="Amiche M."/>
            <person name="Nicolas P."/>
        </authorList>
    </citation>
    <scope>NUCLEOTIDE SEQUENCE [MRNA]</scope>
    <scope>PROTEIN SEQUENCE OF 45-63</scope>
    <scope>FUNCTION</scope>
    <scope>SUBCELLULAR LOCATION</scope>
    <scope>AMIDATION AT GLN-63</scope>
    <scope>MASS SPECTROMETRY</scope>
    <source>
        <tissue>Skin secretion</tissue>
    </source>
</reference>
<reference key="2">
    <citation type="journal article" date="2005" name="Peptides">
        <title>Partial structure of the phylloxin gene from the giant monkey frog, Phyllomedusa bicolor: parallel cloning of precursor cDNA and genomic DNA from lyophilized skin secretion.</title>
        <authorList>
            <person name="Chen T."/>
            <person name="Gagliardo R."/>
            <person name="Walker B."/>
            <person name="Zhou M."/>
            <person name="Shaw C."/>
        </authorList>
    </citation>
    <scope>NUCLEOTIDE SEQUENCE [GENOMIC DNA]</scope>
    <scope>NUCLEOTIDE SEQUENCE [MRNA]</scope>
    <source>
        <tissue>Skin secretion</tissue>
    </source>
</reference>
<reference key="3">
    <citation type="journal article" date="2008" name="Peptides">
        <title>A consistent nomenclature of antimicrobial peptides isolated from frogs of the subfamily Phyllomedusinae.</title>
        <authorList>
            <person name="Amiche M."/>
            <person name="Ladram A."/>
            <person name="Nicolas P."/>
        </authorList>
    </citation>
    <scope>NOMENCLATURE</scope>
</reference>
<dbReference type="EMBL" id="AJ251876">
    <property type="protein sequence ID" value="CAB63925.1"/>
    <property type="molecule type" value="mRNA"/>
</dbReference>
<dbReference type="EMBL" id="AJ867213">
    <property type="protein sequence ID" value="CAI29483.1"/>
    <property type="molecule type" value="Genomic_DNA"/>
</dbReference>
<dbReference type="GO" id="GO:0005576">
    <property type="term" value="C:extracellular region"/>
    <property type="evidence" value="ECO:0007669"/>
    <property type="project" value="UniProtKB-SubCell"/>
</dbReference>
<dbReference type="GO" id="GO:0042742">
    <property type="term" value="P:defense response to bacterium"/>
    <property type="evidence" value="ECO:0007669"/>
    <property type="project" value="UniProtKB-KW"/>
</dbReference>
<dbReference type="GO" id="GO:0045087">
    <property type="term" value="P:innate immune response"/>
    <property type="evidence" value="ECO:0007669"/>
    <property type="project" value="UniProtKB-KW"/>
</dbReference>
<dbReference type="InterPro" id="IPR004275">
    <property type="entry name" value="Frog_antimicrobial_propeptide"/>
</dbReference>
<dbReference type="Pfam" id="PF03032">
    <property type="entry name" value="FSAP_sig_propep"/>
    <property type="match status" value="1"/>
</dbReference>
<comment type="function">
    <text evidence="2">Antimicrobial peptide against the wall-less bacteria A.laidlawii and S.melliferum, the Gram-positive bacteria B.megaterium KM, C.glutamicum ATCC 27853 and M.luteus ATCC 27853 and the Gram-negative-bacteria R.meliloti 102F34 and E.coli K12.</text>
</comment>
<comment type="subcellular location">
    <subcellularLocation>
        <location evidence="2">Secreted</location>
    </subcellularLocation>
</comment>
<comment type="tissue specificity">
    <text evidence="7">Expressed by the skin glands.</text>
</comment>
<comment type="mass spectrometry" mass="1980.96" error="0.1" method="Electrospray" evidence="2"/>
<comment type="similarity">
    <text evidence="6">Belongs to the frog skin active peptide (FSAP) family. Phylloxin subfamily.</text>
</comment>
<comment type="online information" name="The antimicrobial peptide database">
    <link uri="https://wangapd3.com/database/query_output.php?ID=00167"/>
</comment>
<keyword id="KW-0027">Amidation</keyword>
<keyword id="KW-0878">Amphibian defense peptide</keyword>
<keyword id="KW-0044">Antibiotic</keyword>
<keyword id="KW-0929">Antimicrobial</keyword>
<keyword id="KW-0165">Cleavage on pair of basic residues</keyword>
<keyword id="KW-0903">Direct protein sequencing</keyword>
<keyword id="KW-0391">Immunity</keyword>
<keyword id="KW-0399">Innate immunity</keyword>
<keyword id="KW-0964">Secreted</keyword>
<keyword id="KW-0732">Signal</keyword>
<sequence length="64" mass="7256">MVFLKKSLLLVLFVGLVSLSICEENKREEHEEIEENKEKAEEKRGWMSKIASGIGTFLSGMQQG</sequence>
<evidence type="ECO:0000255" key="1"/>
<evidence type="ECO:0000269" key="2">
    <source>
    </source>
</evidence>
<evidence type="ECO:0000303" key="3">
    <source>
    </source>
</evidence>
<evidence type="ECO:0000303" key="4">
    <source>
    </source>
</evidence>
<evidence type="ECO:0000303" key="5">
    <source>
    </source>
</evidence>
<evidence type="ECO:0000305" key="6"/>
<evidence type="ECO:0000305" key="7">
    <source>
    </source>
</evidence>
<protein>
    <recommendedName>
        <fullName evidence="5">Phylloxin-B1</fullName>
        <shortName evidence="5">PLX-B1</shortName>
    </recommendedName>
    <alternativeName>
        <fullName evidence="3">Phylloxin</fullName>
    </alternativeName>
</protein>
<feature type="signal peptide" evidence="1">
    <location>
        <begin position="1"/>
        <end position="22"/>
    </location>
</feature>
<feature type="propeptide" id="PRO_0000007115" evidence="7">
    <location>
        <begin position="23"/>
        <end position="42"/>
    </location>
</feature>
<feature type="peptide" id="PRO_0000007116" description="Phylloxin-B1" evidence="2">
    <location>
        <begin position="45"/>
        <end position="63"/>
    </location>
</feature>
<feature type="modified residue" description="Glutamine amide" evidence="2">
    <location>
        <position position="63"/>
    </location>
</feature>
<proteinExistence type="evidence at protein level"/>
<name>PLX1_PHYBI</name>
<accession>P81565</accession>
<accession>Q599T7</accession>
<accession>Q9PT74</accession>
<gene>
    <name evidence="4" type="primary">PLX-B</name>
</gene>
<organism>
    <name type="scientific">Phyllomedusa bicolor</name>
    <name type="common">Two-colored leaf frog</name>
    <name type="synonym">Rana bicolor</name>
    <dbReference type="NCBI Taxonomy" id="8393"/>
    <lineage>
        <taxon>Eukaryota</taxon>
        <taxon>Metazoa</taxon>
        <taxon>Chordata</taxon>
        <taxon>Craniata</taxon>
        <taxon>Vertebrata</taxon>
        <taxon>Euteleostomi</taxon>
        <taxon>Amphibia</taxon>
        <taxon>Batrachia</taxon>
        <taxon>Anura</taxon>
        <taxon>Neobatrachia</taxon>
        <taxon>Hyloidea</taxon>
        <taxon>Hylidae</taxon>
        <taxon>Phyllomedusinae</taxon>
        <taxon>Phyllomedusa</taxon>
    </lineage>
</organism>